<reference evidence="7" key="1">
    <citation type="submission" date="2006-02" db="EMBL/GenBank/DDBJ databases">
        <title>Complete sequence of chromosome of Rhodoferax ferrireducens DSM 15236.</title>
        <authorList>
            <person name="Copeland A."/>
            <person name="Lucas S."/>
            <person name="Lapidus A."/>
            <person name="Barry K."/>
            <person name="Detter J.C."/>
            <person name="Glavina del Rio T."/>
            <person name="Hammon N."/>
            <person name="Israni S."/>
            <person name="Pitluck S."/>
            <person name="Brettin T."/>
            <person name="Bruce D."/>
            <person name="Han C."/>
            <person name="Tapia R."/>
            <person name="Gilna P."/>
            <person name="Kiss H."/>
            <person name="Schmutz J."/>
            <person name="Larimer F."/>
            <person name="Land M."/>
            <person name="Kyrpides N."/>
            <person name="Ivanova N."/>
            <person name="Richardson P."/>
        </authorList>
    </citation>
    <scope>NUCLEOTIDE SEQUENCE [LARGE SCALE GENOMIC DNA]</scope>
    <source>
        <strain evidence="7">ATCC BAA-621 / DSM 15236 / T118</strain>
    </source>
</reference>
<reference evidence="4" key="2">
    <citation type="journal article" date="2015" name="Proc. Natl. Acad. Sci. U.S.A.">
        <title>Panoramic view of a superfamily of phosphatases through substrate profiling.</title>
        <authorList>
            <person name="Huang H."/>
            <person name="Pandya C."/>
            <person name="Liu C."/>
            <person name="Al-Obaidi N.F."/>
            <person name="Wang M."/>
            <person name="Zheng L."/>
            <person name="Toews Keating S."/>
            <person name="Aono M."/>
            <person name="Love J.D."/>
            <person name="Evans B."/>
            <person name="Seidel R.D."/>
            <person name="Hillerich B.S."/>
            <person name="Garforth S.J."/>
            <person name="Almo S.C."/>
            <person name="Mariano P.S."/>
            <person name="Dunaway-Mariano D."/>
            <person name="Allen K.N."/>
            <person name="Farelli J.D."/>
        </authorList>
    </citation>
    <scope>FUNCTION</scope>
    <scope>CATALYTIC ACTIVITY</scope>
    <scope>COFACTOR</scope>
</reference>
<gene>
    <name evidence="1" type="primary">serB</name>
    <name evidence="6" type="ordered locus">Rfer_1329</name>
</gene>
<sequence>MHPTAIAPGLIIQGFAPPLRLSDFKLIAFDMDSTLINIECVDEIADAVGRKREVAAITEAAMRGEITDYKESLRQRVALLQGVTEVQMNQIYQERMQFNPGAAELVAACKAAGLKVLLVSGGFTHFTDRVAQRLGIDYTRSNVLQIENGVLTGRMVDQPWGDICDGAEKRKMLLETCALLGIAPKQAIAVGDGANDLPMMREAGLSVAFHAKSAVRELANVSIESGGLDRLLELFQP</sequence>
<proteinExistence type="evidence at protein level"/>
<organism evidence="7">
    <name type="scientific">Albidiferax ferrireducens (strain ATCC BAA-621 / DSM 15236 / T118)</name>
    <name type="common">Rhodoferax ferrireducens</name>
    <dbReference type="NCBI Taxonomy" id="338969"/>
    <lineage>
        <taxon>Bacteria</taxon>
        <taxon>Pseudomonadati</taxon>
        <taxon>Pseudomonadota</taxon>
        <taxon>Betaproteobacteria</taxon>
        <taxon>Burkholderiales</taxon>
        <taxon>Comamonadaceae</taxon>
        <taxon>Rhodoferax</taxon>
    </lineage>
</organism>
<evidence type="ECO:0000250" key="1">
    <source>
        <dbReference type="UniProtKB" id="P0AGB0"/>
    </source>
</evidence>
<evidence type="ECO:0000250" key="2">
    <source>
        <dbReference type="UniProtKB" id="Q58989"/>
    </source>
</evidence>
<evidence type="ECO:0000269" key="3">
    <source>
    </source>
</evidence>
<evidence type="ECO:0000305" key="4"/>
<evidence type="ECO:0000305" key="5">
    <source>
    </source>
</evidence>
<evidence type="ECO:0000312" key="6">
    <source>
        <dbReference type="EMBL" id="ABD69063.1"/>
    </source>
</evidence>
<evidence type="ECO:0000312" key="7">
    <source>
        <dbReference type="Proteomes" id="UP000008332"/>
    </source>
</evidence>
<feature type="chain" id="PRO_0000435619" description="Phosphoserine phosphatase" evidence="4">
    <location>
        <begin position="1"/>
        <end position="237"/>
    </location>
</feature>
<feature type="active site" description="Nucleophile" evidence="2">
    <location>
        <position position="30"/>
    </location>
</feature>
<feature type="active site" description="Proton donor" evidence="2">
    <location>
        <position position="32"/>
    </location>
</feature>
<feature type="binding site" evidence="2">
    <location>
        <position position="30"/>
    </location>
    <ligand>
        <name>Mg(2+)</name>
        <dbReference type="ChEBI" id="CHEBI:18420"/>
    </ligand>
</feature>
<feature type="binding site" evidence="2">
    <location>
        <position position="32"/>
    </location>
    <ligand>
        <name>Mg(2+)</name>
        <dbReference type="ChEBI" id="CHEBI:18420"/>
    </ligand>
</feature>
<feature type="binding site" evidence="2">
    <location>
        <position position="39"/>
    </location>
    <ligand>
        <name>substrate</name>
    </ligand>
</feature>
<feature type="binding site" evidence="2">
    <location>
        <position position="76"/>
    </location>
    <ligand>
        <name>substrate</name>
    </ligand>
</feature>
<feature type="binding site" evidence="2">
    <location>
        <begin position="120"/>
        <end position="121"/>
    </location>
    <ligand>
        <name>substrate</name>
    </ligand>
</feature>
<feature type="binding site" evidence="2">
    <location>
        <position position="169"/>
    </location>
    <ligand>
        <name>substrate</name>
    </ligand>
</feature>
<feature type="binding site" evidence="2">
    <location>
        <position position="192"/>
    </location>
    <ligand>
        <name>Mg(2+)</name>
        <dbReference type="ChEBI" id="CHEBI:18420"/>
    </ligand>
</feature>
<feature type="binding site" evidence="2">
    <location>
        <position position="195"/>
    </location>
    <ligand>
        <name>substrate</name>
    </ligand>
</feature>
<dbReference type="EC" id="3.1.3.3" evidence="3"/>
<dbReference type="EMBL" id="CP000267">
    <property type="protein sequence ID" value="ABD69063.1"/>
    <property type="molecule type" value="Genomic_DNA"/>
</dbReference>
<dbReference type="RefSeq" id="WP_011463631.1">
    <property type="nucleotide sequence ID" value="NC_007908.1"/>
</dbReference>
<dbReference type="SMR" id="Q21YU0"/>
<dbReference type="STRING" id="338969.Rfer_1329"/>
<dbReference type="KEGG" id="rfr:Rfer_1329"/>
<dbReference type="eggNOG" id="COG0560">
    <property type="taxonomic scope" value="Bacteria"/>
</dbReference>
<dbReference type="HOGENOM" id="CLU_036368_4_3_4"/>
<dbReference type="OrthoDB" id="9792539at2"/>
<dbReference type="UniPathway" id="UPA00135">
    <property type="reaction ID" value="UER00198"/>
</dbReference>
<dbReference type="Proteomes" id="UP000008332">
    <property type="component" value="Chromosome"/>
</dbReference>
<dbReference type="GO" id="GO:0005737">
    <property type="term" value="C:cytoplasm"/>
    <property type="evidence" value="ECO:0007669"/>
    <property type="project" value="TreeGrafter"/>
</dbReference>
<dbReference type="GO" id="GO:0036424">
    <property type="term" value="F:L-phosphoserine phosphatase activity"/>
    <property type="evidence" value="ECO:0007669"/>
    <property type="project" value="InterPro"/>
</dbReference>
<dbReference type="GO" id="GO:0000287">
    <property type="term" value="F:magnesium ion binding"/>
    <property type="evidence" value="ECO:0007669"/>
    <property type="project" value="TreeGrafter"/>
</dbReference>
<dbReference type="GO" id="GO:0006564">
    <property type="term" value="P:L-serine biosynthetic process"/>
    <property type="evidence" value="ECO:0007669"/>
    <property type="project" value="UniProtKB-KW"/>
</dbReference>
<dbReference type="CDD" id="cd07500">
    <property type="entry name" value="HAD_PSP"/>
    <property type="match status" value="1"/>
</dbReference>
<dbReference type="Gene3D" id="3.40.50.1000">
    <property type="entry name" value="HAD superfamily/HAD-like"/>
    <property type="match status" value="1"/>
</dbReference>
<dbReference type="InterPro" id="IPR050582">
    <property type="entry name" value="HAD-like_SerB"/>
</dbReference>
<dbReference type="InterPro" id="IPR036412">
    <property type="entry name" value="HAD-like_sf"/>
</dbReference>
<dbReference type="InterPro" id="IPR023214">
    <property type="entry name" value="HAD_sf"/>
</dbReference>
<dbReference type="InterPro" id="IPR004469">
    <property type="entry name" value="PSP"/>
</dbReference>
<dbReference type="NCBIfam" id="TIGR01488">
    <property type="entry name" value="HAD-SF-IB"/>
    <property type="match status" value="1"/>
</dbReference>
<dbReference type="NCBIfam" id="TIGR00338">
    <property type="entry name" value="serB"/>
    <property type="match status" value="1"/>
</dbReference>
<dbReference type="PANTHER" id="PTHR43344">
    <property type="entry name" value="PHOSPHOSERINE PHOSPHATASE"/>
    <property type="match status" value="1"/>
</dbReference>
<dbReference type="PANTHER" id="PTHR43344:SF2">
    <property type="entry name" value="PHOSPHOSERINE PHOSPHATASE"/>
    <property type="match status" value="1"/>
</dbReference>
<dbReference type="Pfam" id="PF00702">
    <property type="entry name" value="Hydrolase"/>
    <property type="match status" value="1"/>
</dbReference>
<dbReference type="SFLD" id="SFLDG01129">
    <property type="entry name" value="C1.5:_HAD__Beta-PGM__Phosphata"/>
    <property type="match status" value="1"/>
</dbReference>
<dbReference type="SFLD" id="SFLDG01136">
    <property type="entry name" value="C1.6:_Phosphoserine_Phosphatas"/>
    <property type="match status" value="1"/>
</dbReference>
<dbReference type="SFLD" id="SFLDF00029">
    <property type="entry name" value="phosphoserine_phosphatase"/>
    <property type="match status" value="1"/>
</dbReference>
<dbReference type="SUPFAM" id="SSF56784">
    <property type="entry name" value="HAD-like"/>
    <property type="match status" value="1"/>
</dbReference>
<protein>
    <recommendedName>
        <fullName evidence="5">Phosphoserine phosphatase</fullName>
        <shortName evidence="2">PSP</shortName>
        <shortName evidence="2">PSPase</shortName>
        <ecNumber evidence="3">3.1.3.3</ecNumber>
    </recommendedName>
    <alternativeName>
        <fullName evidence="2">O-phosphoserine phosphohydrolase</fullName>
    </alternativeName>
</protein>
<accession>Q21YU0</accession>
<keyword id="KW-0028">Amino-acid biosynthesis</keyword>
<keyword id="KW-0378">Hydrolase</keyword>
<keyword id="KW-0460">Magnesium</keyword>
<keyword id="KW-0479">Metal-binding</keyword>
<keyword id="KW-1185">Reference proteome</keyword>
<keyword id="KW-0718">Serine biosynthesis</keyword>
<comment type="function">
    <text evidence="3">Catalyzes the dephosphorylation of phosphoserine (P-Ser) in vitro. Also catalyzes the dephosphorylation of phosphothreonine (P-Thr) in vitro.</text>
</comment>
<comment type="catalytic activity">
    <reaction evidence="3">
        <text>O-phospho-L-serine + H2O = L-serine + phosphate</text>
        <dbReference type="Rhea" id="RHEA:21208"/>
        <dbReference type="ChEBI" id="CHEBI:15377"/>
        <dbReference type="ChEBI" id="CHEBI:33384"/>
        <dbReference type="ChEBI" id="CHEBI:43474"/>
        <dbReference type="ChEBI" id="CHEBI:57524"/>
        <dbReference type="EC" id="3.1.3.3"/>
    </reaction>
</comment>
<comment type="catalytic activity">
    <reaction evidence="3">
        <text>O-phospho-D-serine + H2O = D-serine + phosphate</text>
        <dbReference type="Rhea" id="RHEA:24873"/>
        <dbReference type="ChEBI" id="CHEBI:15377"/>
        <dbReference type="ChEBI" id="CHEBI:35247"/>
        <dbReference type="ChEBI" id="CHEBI:43474"/>
        <dbReference type="ChEBI" id="CHEBI:58680"/>
        <dbReference type="EC" id="3.1.3.3"/>
    </reaction>
</comment>
<comment type="cofactor">
    <cofactor evidence="3">
        <name>Mg(2+)</name>
        <dbReference type="ChEBI" id="CHEBI:18420"/>
    </cofactor>
</comment>
<comment type="pathway">
    <text evidence="4">Amino-acid biosynthesis; L-serine biosynthesis; L-serine from 3-phospho-D-glycerate: step 3/3.</text>
</comment>
<comment type="similarity">
    <text evidence="4">Belongs to the HAD-like hydrolase superfamily. SerB family.</text>
</comment>
<name>SERB_ALBFT</name>